<name>SMG_VIBC1</name>
<proteinExistence type="inferred from homology"/>
<protein>
    <recommendedName>
        <fullName evidence="1">Protein Smg homolog</fullName>
    </recommendedName>
</protein>
<reference key="1">
    <citation type="submission" date="2007-08" db="EMBL/GenBank/DDBJ databases">
        <authorList>
            <consortium name="The Vibrio harveyi Genome Sequencing Project"/>
            <person name="Bassler B."/>
            <person name="Clifton S.W."/>
            <person name="Fulton L."/>
            <person name="Delehaunty K."/>
            <person name="Fronick C."/>
            <person name="Harrison M."/>
            <person name="Markivic C."/>
            <person name="Fulton R."/>
            <person name="Tin-Wollam A.-M."/>
            <person name="Shah N."/>
            <person name="Pepin K."/>
            <person name="Nash W."/>
            <person name="Thiruvilangam P."/>
            <person name="Bhonagiri V."/>
            <person name="Waters C."/>
            <person name="Tu K.C."/>
            <person name="Irgon J."/>
            <person name="Wilson R.K."/>
        </authorList>
    </citation>
    <scope>NUCLEOTIDE SEQUENCE [LARGE SCALE GENOMIC DNA]</scope>
    <source>
        <strain>ATCC BAA-1116 / BB120</strain>
    </source>
</reference>
<dbReference type="EMBL" id="CP000789">
    <property type="protein sequence ID" value="ABU69403.1"/>
    <property type="molecule type" value="Genomic_DNA"/>
</dbReference>
<dbReference type="RefSeq" id="WP_005429833.1">
    <property type="nucleotide sequence ID" value="NC_022269.1"/>
</dbReference>
<dbReference type="SMR" id="A7N118"/>
<dbReference type="KEGG" id="vha:VIBHAR_00388"/>
<dbReference type="PATRIC" id="fig|338187.25.peg.2203"/>
<dbReference type="Proteomes" id="UP000008152">
    <property type="component" value="Chromosome I"/>
</dbReference>
<dbReference type="HAMAP" id="MF_00598">
    <property type="entry name" value="Smg"/>
    <property type="match status" value="1"/>
</dbReference>
<dbReference type="InterPro" id="IPR007456">
    <property type="entry name" value="Smg"/>
</dbReference>
<dbReference type="NCBIfam" id="NF002897">
    <property type="entry name" value="PRK03430.1"/>
    <property type="match status" value="1"/>
</dbReference>
<dbReference type="PANTHER" id="PTHR38692">
    <property type="entry name" value="PROTEIN SMG"/>
    <property type="match status" value="1"/>
</dbReference>
<dbReference type="PANTHER" id="PTHR38692:SF1">
    <property type="entry name" value="PROTEIN SMG"/>
    <property type="match status" value="1"/>
</dbReference>
<dbReference type="Pfam" id="PF04361">
    <property type="entry name" value="DUF494"/>
    <property type="match status" value="1"/>
</dbReference>
<evidence type="ECO:0000255" key="1">
    <source>
        <dbReference type="HAMAP-Rule" id="MF_00598"/>
    </source>
</evidence>
<accession>A7N118</accession>
<feature type="chain" id="PRO_1000025678" description="Protein Smg homolog">
    <location>
        <begin position="1"/>
        <end position="159"/>
    </location>
</feature>
<comment type="similarity">
    <text evidence="1">Belongs to the Smg family.</text>
</comment>
<sequence>MMMDILMYLFETYIHSDAELQVEQDELEDELLRAGFQQKDIYKALVWLEELAALQQSDEHSAISTCIASASTRIYTASEMQRLDLECRGFLLFLEQINVLTTETREMVIDRVMGLETNEFELEDLKWIILMVLFNVPGNENAYTLMEELLYTKEQGILH</sequence>
<gene>
    <name evidence="1" type="primary">smg</name>
    <name type="ordered locus">VIBHAR_00388</name>
</gene>
<organism>
    <name type="scientific">Vibrio campbellii (strain ATCC BAA-1116)</name>
    <dbReference type="NCBI Taxonomy" id="2902295"/>
    <lineage>
        <taxon>Bacteria</taxon>
        <taxon>Pseudomonadati</taxon>
        <taxon>Pseudomonadota</taxon>
        <taxon>Gammaproteobacteria</taxon>
        <taxon>Vibrionales</taxon>
        <taxon>Vibrionaceae</taxon>
        <taxon>Vibrio</taxon>
    </lineage>
</organism>